<gene>
    <name type="ORF">BRAFLDRAFT_56888</name>
</gene>
<protein>
    <recommendedName>
        <fullName>Alpha-L-fucosidase</fullName>
        <ecNumber>3.2.1.51</ecNumber>
    </recommendedName>
    <alternativeName>
        <fullName>Alpha-L-fucoside fucohydrolase</fullName>
    </alternativeName>
</protein>
<accession>C3YWU0</accession>
<keyword id="KW-0325">Glycoprotein</keyword>
<keyword id="KW-0326">Glycosidase</keyword>
<keyword id="KW-0378">Hydrolase</keyword>
<keyword id="KW-1185">Reference proteome</keyword>
<keyword id="KW-0964">Secreted</keyword>
<keyword id="KW-0732">Signal</keyword>
<proteinExistence type="inferred from homology"/>
<feature type="signal peptide" evidence="2">
    <location>
        <begin position="1"/>
        <end position="19"/>
    </location>
</feature>
<feature type="chain" id="PRO_0000406973" description="Alpha-L-fucosidase">
    <location>
        <begin position="20"/>
        <end position="449"/>
    </location>
</feature>
<feature type="glycosylation site" description="N-linked (GlcNAc...) asparagine" evidence="2">
    <location>
        <position position="156"/>
    </location>
</feature>
<feature type="glycosylation site" description="N-linked (GlcNAc...) asparagine" evidence="2">
    <location>
        <position position="224"/>
    </location>
</feature>
<feature type="glycosylation site" description="N-linked (GlcNAc...) asparagine" evidence="2">
    <location>
        <position position="362"/>
    </location>
</feature>
<feature type="glycosylation site" description="N-linked (GlcNAc...) asparagine" evidence="2">
    <location>
        <position position="375"/>
    </location>
</feature>
<dbReference type="EC" id="3.2.1.51"/>
<dbReference type="EMBL" id="GG666561">
    <property type="protein sequence ID" value="EEN55334.1"/>
    <property type="status" value="ALT_SEQ"/>
    <property type="molecule type" value="Genomic_DNA"/>
</dbReference>
<dbReference type="RefSeq" id="XP_002599322.1">
    <property type="nucleotide sequence ID" value="XM_002599276.1"/>
</dbReference>
<dbReference type="SMR" id="C3YWU0"/>
<dbReference type="FunCoup" id="C3YWU0">
    <property type="interactions" value="54"/>
</dbReference>
<dbReference type="STRING" id="7739.C3YWU0"/>
<dbReference type="eggNOG" id="KOG3340">
    <property type="taxonomic scope" value="Eukaryota"/>
</dbReference>
<dbReference type="InParanoid" id="C3YWU0"/>
<dbReference type="Proteomes" id="UP000001554">
    <property type="component" value="Unplaced"/>
</dbReference>
<dbReference type="GO" id="GO:0005576">
    <property type="term" value="C:extracellular region"/>
    <property type="evidence" value="ECO:0007669"/>
    <property type="project" value="UniProtKB-SubCell"/>
</dbReference>
<dbReference type="GO" id="GO:0005764">
    <property type="term" value="C:lysosome"/>
    <property type="evidence" value="ECO:0000318"/>
    <property type="project" value="GO_Central"/>
</dbReference>
<dbReference type="GO" id="GO:0004560">
    <property type="term" value="F:alpha-L-fucosidase activity"/>
    <property type="evidence" value="ECO:0000318"/>
    <property type="project" value="GO_Central"/>
</dbReference>
<dbReference type="GO" id="GO:0006004">
    <property type="term" value="P:fucose metabolic process"/>
    <property type="evidence" value="ECO:0000318"/>
    <property type="project" value="GO_Central"/>
</dbReference>
<dbReference type="GO" id="GO:0016139">
    <property type="term" value="P:glycoside catabolic process"/>
    <property type="evidence" value="ECO:0000318"/>
    <property type="project" value="GO_Central"/>
</dbReference>
<dbReference type="FunFam" id="2.60.40.1180:FF:000013">
    <property type="entry name" value="Alpha-L-fucosidase"/>
    <property type="match status" value="1"/>
</dbReference>
<dbReference type="FunFam" id="3.20.20.80:FF:000027">
    <property type="entry name" value="Alpha-L-fucosidase"/>
    <property type="match status" value="1"/>
</dbReference>
<dbReference type="Gene3D" id="3.20.20.80">
    <property type="entry name" value="Glycosidases"/>
    <property type="match status" value="1"/>
</dbReference>
<dbReference type="Gene3D" id="2.60.40.1180">
    <property type="entry name" value="Golgi alpha-mannosidase II"/>
    <property type="match status" value="1"/>
</dbReference>
<dbReference type="InterPro" id="IPR016286">
    <property type="entry name" value="FUC_metazoa-typ"/>
</dbReference>
<dbReference type="InterPro" id="IPR031919">
    <property type="entry name" value="Fucosidase_C"/>
</dbReference>
<dbReference type="InterPro" id="IPR000933">
    <property type="entry name" value="Glyco_hydro_29"/>
</dbReference>
<dbReference type="InterPro" id="IPR018526">
    <property type="entry name" value="Glyco_hydro_29_CS"/>
</dbReference>
<dbReference type="InterPro" id="IPR013780">
    <property type="entry name" value="Glyco_hydro_b"/>
</dbReference>
<dbReference type="InterPro" id="IPR017853">
    <property type="entry name" value="Glycoside_hydrolase_SF"/>
</dbReference>
<dbReference type="PANTHER" id="PTHR10030">
    <property type="entry name" value="ALPHA-L-FUCOSIDASE"/>
    <property type="match status" value="1"/>
</dbReference>
<dbReference type="PANTHER" id="PTHR10030:SF37">
    <property type="entry name" value="ALPHA-L-FUCOSIDASE-RELATED"/>
    <property type="match status" value="1"/>
</dbReference>
<dbReference type="Pfam" id="PF01120">
    <property type="entry name" value="Alpha_L_fucos"/>
    <property type="match status" value="1"/>
</dbReference>
<dbReference type="Pfam" id="PF16757">
    <property type="entry name" value="Fucosidase_C"/>
    <property type="match status" value="1"/>
</dbReference>
<dbReference type="PIRSF" id="PIRSF001092">
    <property type="entry name" value="Alpha-L-fucosidase"/>
    <property type="match status" value="1"/>
</dbReference>
<dbReference type="PRINTS" id="PR00741">
    <property type="entry name" value="GLHYDRLASE29"/>
</dbReference>
<dbReference type="SMART" id="SM00812">
    <property type="entry name" value="Alpha_L_fucos"/>
    <property type="match status" value="1"/>
</dbReference>
<dbReference type="SUPFAM" id="SSF51445">
    <property type="entry name" value="(Trans)glycosidases"/>
    <property type="match status" value="1"/>
</dbReference>
<dbReference type="PROSITE" id="PS00385">
    <property type="entry name" value="ALPHA_L_FUCOSIDASE"/>
    <property type="match status" value="1"/>
</dbReference>
<comment type="function">
    <text evidence="1">Alpha-L-fucosidase is responsible for hydrolyzing the alpha-1,6-linked fucose joined to the reducing-end N-acetylglucosamine of the carbohydrate moieties of glycoproteins.</text>
</comment>
<comment type="catalytic activity">
    <reaction evidence="3">
        <text>an alpha-L-fucoside + H2O = L-fucose + an alcohol</text>
        <dbReference type="Rhea" id="RHEA:12288"/>
        <dbReference type="ChEBI" id="CHEBI:2181"/>
        <dbReference type="ChEBI" id="CHEBI:15377"/>
        <dbReference type="ChEBI" id="CHEBI:28349"/>
        <dbReference type="ChEBI" id="CHEBI:30879"/>
        <dbReference type="EC" id="3.2.1.51"/>
    </reaction>
</comment>
<comment type="subunit">
    <text evidence="1">Homotetramer.</text>
</comment>
<comment type="subcellular location">
    <subcellularLocation>
        <location evidence="4">Secreted</location>
    </subcellularLocation>
</comment>
<comment type="similarity">
    <text evidence="4">Belongs to the glycosyl hydrolase 29 family.</text>
</comment>
<comment type="sequence caution" evidence="4">
    <conflict type="erroneous gene model prediction">
        <sequence resource="EMBL-CDS" id="EEN55334"/>
    </conflict>
</comment>
<organism>
    <name type="scientific">Branchiostoma floridae</name>
    <name type="common">Florida lancelet</name>
    <name type="synonym">Amphioxus</name>
    <dbReference type="NCBI Taxonomy" id="7739"/>
    <lineage>
        <taxon>Eukaryota</taxon>
        <taxon>Metazoa</taxon>
        <taxon>Chordata</taxon>
        <taxon>Cephalochordata</taxon>
        <taxon>Leptocardii</taxon>
        <taxon>Amphioxiformes</taxon>
        <taxon>Branchiostomatidae</taxon>
        <taxon>Branchiostoma</taxon>
    </lineage>
</organism>
<reference key="1">
    <citation type="journal article" date="2008" name="Nature">
        <title>The amphioxus genome and the evolution of the chordate karyotype.</title>
        <authorList>
            <person name="Putnam N.H."/>
            <person name="Butts T."/>
            <person name="Ferrier D.E.K."/>
            <person name="Furlong R.F."/>
            <person name="Hellsten U."/>
            <person name="Kawashima T."/>
            <person name="Robinson-Rechavi M."/>
            <person name="Shoguchi E."/>
            <person name="Terry A."/>
            <person name="Yu J.-K."/>
            <person name="Benito-Gutierrez E.L."/>
            <person name="Dubchak I."/>
            <person name="Garcia-Fernandez J."/>
            <person name="Gibson-Brown J.J."/>
            <person name="Grigoriev I.V."/>
            <person name="Horton A.C."/>
            <person name="de Jong P.J."/>
            <person name="Jurka J."/>
            <person name="Kapitonov V.V."/>
            <person name="Kohara Y."/>
            <person name="Kuroki Y."/>
            <person name="Lindquist E."/>
            <person name="Lucas S."/>
            <person name="Osoegawa K."/>
            <person name="Pennacchio L.A."/>
            <person name="Salamov A.A."/>
            <person name="Satou Y."/>
            <person name="Sauka-Spengler T."/>
            <person name="Schmutz J."/>
            <person name="Shin-I T."/>
            <person name="Toyoda A."/>
            <person name="Bronner-Fraser M."/>
            <person name="Fujiyama A."/>
            <person name="Holland L.Z."/>
            <person name="Holland P.W.H."/>
            <person name="Satoh N."/>
            <person name="Rokhsar D.S."/>
        </authorList>
    </citation>
    <scope>NUCLEOTIDE SEQUENCE [LARGE SCALE GENOMIC DNA]</scope>
    <source>
        <strain>S238N-H82</strain>
    </source>
</reference>
<name>FUCO_BRAFL</name>
<evidence type="ECO:0000250" key="1"/>
<evidence type="ECO:0000255" key="2"/>
<evidence type="ECO:0000255" key="3">
    <source>
        <dbReference type="PROSITE-ProRule" id="PRU10054"/>
    </source>
</evidence>
<evidence type="ECO:0000305" key="4"/>
<sequence length="449" mass="51880">MGLLLLLSLLSACFQPRYAPTWDSLDQRPLPSWYDEAKFGIFMHWGVFSVPSFGSEWFWWDWKGAHDQNFIKDFMKRNYPPGFRYADFAPMFTAEWYNPLQWAEVLQASGAKYVVLTSKHHEGFTNWPSKYSWNWNSVDNGPHRDLVGELAMAIRNNSDLHFGLYYSLFEWFHPLYLKDKQNKWTTQDYTKDVGLAELYELVNAYHPEVVWSDGDWEAPYTYWNSTNFLAWLYNDSPVKDTVVTNDRWGSGMLCHHGGYYTCSDRYNPGVLQKHKWENCMTIDKKSWGFRREATLADYLDMDDLVKILAETVSCGGNLLMNIGPTHDGRIVPIFEERLRSMGKWLQVNGDAIYATKPWRAQNDTRESGVWYTSKNDSVYAIVLDWPNSGQLTLGVPRSSPTTTVTMLGWAAPLKWVAVSGSGITVQMPTASSNQLPCQWAWVIRMKGVM</sequence>